<organism>
    <name type="scientific">Burkholderia pseudomallei (strain 1710b)</name>
    <dbReference type="NCBI Taxonomy" id="320372"/>
    <lineage>
        <taxon>Bacteria</taxon>
        <taxon>Pseudomonadati</taxon>
        <taxon>Pseudomonadota</taxon>
        <taxon>Betaproteobacteria</taxon>
        <taxon>Burkholderiales</taxon>
        <taxon>Burkholderiaceae</taxon>
        <taxon>Burkholderia</taxon>
        <taxon>pseudomallei group</taxon>
    </lineage>
</organism>
<accession>Q3JR31</accession>
<keyword id="KW-0963">Cytoplasm</keyword>
<keyword id="KW-0648">Protein biosynthesis</keyword>
<comment type="function">
    <text evidence="1">Responsible for the release of ribosomes from messenger RNA at the termination of protein biosynthesis. May increase the efficiency of translation by recycling ribosomes from one round of translation to another.</text>
</comment>
<comment type="subcellular location">
    <subcellularLocation>
        <location evidence="1">Cytoplasm</location>
    </subcellularLocation>
</comment>
<comment type="similarity">
    <text evidence="1">Belongs to the RRF family.</text>
</comment>
<gene>
    <name evidence="1" type="primary">frr</name>
    <name type="ordered locus">BURPS1710b_2580</name>
</gene>
<protein>
    <recommendedName>
        <fullName evidence="1">Ribosome-recycling factor</fullName>
        <shortName evidence="1">RRF</shortName>
    </recommendedName>
    <alternativeName>
        <fullName evidence="1">Ribosome-releasing factor</fullName>
    </alternativeName>
</protein>
<dbReference type="EMBL" id="CP000124">
    <property type="protein sequence ID" value="ABA48599.1"/>
    <property type="molecule type" value="Genomic_DNA"/>
</dbReference>
<dbReference type="RefSeq" id="WP_004192143.1">
    <property type="nucleotide sequence ID" value="NC_007434.1"/>
</dbReference>
<dbReference type="SMR" id="Q3JR31"/>
<dbReference type="EnsemblBacteria" id="ABA48599">
    <property type="protein sequence ID" value="ABA48599"/>
    <property type="gene ID" value="BURPS1710b_2580"/>
</dbReference>
<dbReference type="GeneID" id="93060697"/>
<dbReference type="KEGG" id="bpm:BURPS1710b_2580"/>
<dbReference type="HOGENOM" id="CLU_073981_2_1_4"/>
<dbReference type="Proteomes" id="UP000002700">
    <property type="component" value="Chromosome I"/>
</dbReference>
<dbReference type="GO" id="GO:0005829">
    <property type="term" value="C:cytosol"/>
    <property type="evidence" value="ECO:0007669"/>
    <property type="project" value="GOC"/>
</dbReference>
<dbReference type="GO" id="GO:0043023">
    <property type="term" value="F:ribosomal large subunit binding"/>
    <property type="evidence" value="ECO:0007669"/>
    <property type="project" value="TreeGrafter"/>
</dbReference>
<dbReference type="GO" id="GO:0002184">
    <property type="term" value="P:cytoplasmic translational termination"/>
    <property type="evidence" value="ECO:0007669"/>
    <property type="project" value="TreeGrafter"/>
</dbReference>
<dbReference type="CDD" id="cd00520">
    <property type="entry name" value="RRF"/>
    <property type="match status" value="1"/>
</dbReference>
<dbReference type="FunFam" id="1.10.132.20:FF:000001">
    <property type="entry name" value="Ribosome-recycling factor"/>
    <property type="match status" value="1"/>
</dbReference>
<dbReference type="FunFam" id="3.30.1360.40:FF:000001">
    <property type="entry name" value="Ribosome-recycling factor"/>
    <property type="match status" value="1"/>
</dbReference>
<dbReference type="Gene3D" id="3.30.1360.40">
    <property type="match status" value="1"/>
</dbReference>
<dbReference type="Gene3D" id="1.10.132.20">
    <property type="entry name" value="Ribosome-recycling factor"/>
    <property type="match status" value="1"/>
</dbReference>
<dbReference type="HAMAP" id="MF_00040">
    <property type="entry name" value="RRF"/>
    <property type="match status" value="1"/>
</dbReference>
<dbReference type="InterPro" id="IPR002661">
    <property type="entry name" value="Ribosome_recyc_fac"/>
</dbReference>
<dbReference type="InterPro" id="IPR023584">
    <property type="entry name" value="Ribosome_recyc_fac_dom"/>
</dbReference>
<dbReference type="InterPro" id="IPR036191">
    <property type="entry name" value="RRF_sf"/>
</dbReference>
<dbReference type="NCBIfam" id="TIGR00496">
    <property type="entry name" value="frr"/>
    <property type="match status" value="1"/>
</dbReference>
<dbReference type="PANTHER" id="PTHR20982:SF3">
    <property type="entry name" value="MITOCHONDRIAL RIBOSOME RECYCLING FACTOR PSEUDO 1"/>
    <property type="match status" value="1"/>
</dbReference>
<dbReference type="PANTHER" id="PTHR20982">
    <property type="entry name" value="RIBOSOME RECYCLING FACTOR"/>
    <property type="match status" value="1"/>
</dbReference>
<dbReference type="Pfam" id="PF01765">
    <property type="entry name" value="RRF"/>
    <property type="match status" value="1"/>
</dbReference>
<dbReference type="SUPFAM" id="SSF55194">
    <property type="entry name" value="Ribosome recycling factor, RRF"/>
    <property type="match status" value="1"/>
</dbReference>
<reference key="1">
    <citation type="journal article" date="2010" name="Genome Biol. Evol.">
        <title>Continuing evolution of Burkholderia mallei through genome reduction and large-scale rearrangements.</title>
        <authorList>
            <person name="Losada L."/>
            <person name="Ronning C.M."/>
            <person name="DeShazer D."/>
            <person name="Woods D."/>
            <person name="Fedorova N."/>
            <person name="Kim H.S."/>
            <person name="Shabalina S.A."/>
            <person name="Pearson T.R."/>
            <person name="Brinkac L."/>
            <person name="Tan P."/>
            <person name="Nandi T."/>
            <person name="Crabtree J."/>
            <person name="Badger J."/>
            <person name="Beckstrom-Sternberg S."/>
            <person name="Saqib M."/>
            <person name="Schutzer S.E."/>
            <person name="Keim P."/>
            <person name="Nierman W.C."/>
        </authorList>
    </citation>
    <scope>NUCLEOTIDE SEQUENCE [LARGE SCALE GENOMIC DNA]</scope>
    <source>
        <strain>1710b</strain>
    </source>
</reference>
<name>RRF_BURP1</name>
<sequence length="186" mass="20899">MSVADIKKSVEQKMQRSIEAFKNDLAKIRTGRAHTGLLDHVQVDYYGSMVPISQVANLTLVDARTIGVQPWEKTMVAKVEKAIREADLGLNPATSGDLIRVPMPPLTEERRRELTKVVKSEGETAKVAVRNLRRDANEQLKKLVKDKEISEDDERRASDDVQKLTDKHVAEIDKLVQAKDAEIMTV</sequence>
<evidence type="ECO:0000255" key="1">
    <source>
        <dbReference type="HAMAP-Rule" id="MF_00040"/>
    </source>
</evidence>
<feature type="chain" id="PRO_1000003122" description="Ribosome-recycling factor">
    <location>
        <begin position="1"/>
        <end position="186"/>
    </location>
</feature>
<proteinExistence type="inferred from homology"/>